<gene>
    <name type="ordered locus">MmarC6_0667</name>
</gene>
<proteinExistence type="inferred from homology"/>
<organism>
    <name type="scientific">Methanococcus maripaludis (strain C6 / ATCC BAA-1332)</name>
    <dbReference type="NCBI Taxonomy" id="444158"/>
    <lineage>
        <taxon>Archaea</taxon>
        <taxon>Methanobacteriati</taxon>
        <taxon>Methanobacteriota</taxon>
        <taxon>Methanomada group</taxon>
        <taxon>Methanococci</taxon>
        <taxon>Methanococcales</taxon>
        <taxon>Methanococcaceae</taxon>
        <taxon>Methanococcus</taxon>
    </lineage>
</organism>
<dbReference type="EMBL" id="CP000867">
    <property type="protein sequence ID" value="ABX01484.1"/>
    <property type="molecule type" value="Genomic_DNA"/>
</dbReference>
<dbReference type="STRING" id="444158.MmarC6_0667"/>
<dbReference type="KEGG" id="mmx:MmarC6_0667"/>
<dbReference type="eggNOG" id="arCOG01302">
    <property type="taxonomic scope" value="Archaea"/>
</dbReference>
<dbReference type="HOGENOM" id="CLU_172276_3_1_2"/>
<dbReference type="OrthoDB" id="14794at2157"/>
<dbReference type="PhylomeDB" id="A9A811"/>
<dbReference type="HAMAP" id="MF_01245">
    <property type="entry name" value="UPF0248"/>
    <property type="match status" value="1"/>
</dbReference>
<dbReference type="InterPro" id="IPR040459">
    <property type="entry name" value="MJ1316"/>
</dbReference>
<dbReference type="InterPro" id="IPR007547">
    <property type="entry name" value="UPF0248"/>
</dbReference>
<dbReference type="NCBIfam" id="NF003272">
    <property type="entry name" value="PRK04257.1"/>
    <property type="match status" value="1"/>
</dbReference>
<dbReference type="Pfam" id="PF04457">
    <property type="entry name" value="MJ1316"/>
    <property type="match status" value="1"/>
</dbReference>
<feature type="chain" id="PRO_1000139816" description="UPF0248 protein MmarC6_0667">
    <location>
        <begin position="1"/>
        <end position="76"/>
    </location>
</feature>
<accession>A9A811</accession>
<reference key="1">
    <citation type="submission" date="2007-10" db="EMBL/GenBank/DDBJ databases">
        <title>Complete sequence of Methanococcus maripaludis C6.</title>
        <authorList>
            <consortium name="US DOE Joint Genome Institute"/>
            <person name="Copeland A."/>
            <person name="Lucas S."/>
            <person name="Lapidus A."/>
            <person name="Barry K."/>
            <person name="Glavina del Rio T."/>
            <person name="Dalin E."/>
            <person name="Tice H."/>
            <person name="Pitluck S."/>
            <person name="Clum A."/>
            <person name="Schmutz J."/>
            <person name="Larimer F."/>
            <person name="Land M."/>
            <person name="Hauser L."/>
            <person name="Kyrpides N."/>
            <person name="Mikhailova N."/>
            <person name="Sieprawska-Lupa M."/>
            <person name="Whitman W.B."/>
            <person name="Richardson P."/>
        </authorList>
    </citation>
    <scope>NUCLEOTIDE SEQUENCE [LARGE SCALE GENOMIC DNA]</scope>
    <source>
        <strain>C6 / ATCC BAA-1332</strain>
    </source>
</reference>
<sequence length="76" mass="9137">MLKELINKLLWHPGYNPEDYVIKYLHRGAENDEKSVPLQNIVIEDSFLFFDETHIPFHRILEIVNLKNGEILYKKR</sequence>
<protein>
    <recommendedName>
        <fullName evidence="1">UPF0248 protein MmarC6_0667</fullName>
    </recommendedName>
</protein>
<evidence type="ECO:0000255" key="1">
    <source>
        <dbReference type="HAMAP-Rule" id="MF_01245"/>
    </source>
</evidence>
<name>Y667_METM6</name>
<comment type="similarity">
    <text evidence="1">Belongs to the UPF0248 family.</text>
</comment>